<sequence>MDFNLNDEQELFVAGIRELMASENWEAYFAECDRDSVYPERFVKALADMGIDSLLIPEEHGGLDAGFVTLAAVWMELGRLGAPTYVLYQLPGGFNTFLREGTQEQIDKIMAFRGTGKQMWNSAITEPGAGSDVGSLKTTYTRRNGKIYLNGSKCFITSSAYTPYIVVMARDGASPDKPVYTEWFVDMSKPGIKVTKLEKLGLRMDSCCEITFDDVELDEKDMFGREGNGFNRVKEEFDHERFLVALTNYGTAMCAFEDAARYANQRVQFGEAIGRFQLIQEKFAHMAIKLNSMKNMLYEAAWKADNGTITSGDAAMCKYFCANAAFEVVDSAMQVLGGVGIAGNHRISRFWRDLRVDRVSGGSDEMQILTLGRAVLKQYR</sequence>
<gene>
    <name evidence="1" type="primary">caiA</name>
    <name type="ordered locus">ECED1_0038</name>
</gene>
<organism>
    <name type="scientific">Escherichia coli O81 (strain ED1a)</name>
    <dbReference type="NCBI Taxonomy" id="585397"/>
    <lineage>
        <taxon>Bacteria</taxon>
        <taxon>Pseudomonadati</taxon>
        <taxon>Pseudomonadota</taxon>
        <taxon>Gammaproteobacteria</taxon>
        <taxon>Enterobacterales</taxon>
        <taxon>Enterobacteriaceae</taxon>
        <taxon>Escherichia</taxon>
    </lineage>
</organism>
<dbReference type="EC" id="1.3.8.13" evidence="1"/>
<dbReference type="EMBL" id="CU928162">
    <property type="protein sequence ID" value="CAR06261.1"/>
    <property type="molecule type" value="Genomic_DNA"/>
</dbReference>
<dbReference type="RefSeq" id="WP_000347117.1">
    <property type="nucleotide sequence ID" value="NC_011745.1"/>
</dbReference>
<dbReference type="SMR" id="B7MNP6"/>
<dbReference type="GeneID" id="93777396"/>
<dbReference type="KEGG" id="ecq:ECED1_0038"/>
<dbReference type="HOGENOM" id="CLU_018204_0_2_6"/>
<dbReference type="UniPathway" id="UPA00117"/>
<dbReference type="Proteomes" id="UP000000748">
    <property type="component" value="Chromosome"/>
</dbReference>
<dbReference type="GO" id="GO:0005737">
    <property type="term" value="C:cytoplasm"/>
    <property type="evidence" value="ECO:0007669"/>
    <property type="project" value="UniProtKB-SubCell"/>
</dbReference>
<dbReference type="GO" id="GO:0003995">
    <property type="term" value="F:acyl-CoA dehydrogenase activity"/>
    <property type="evidence" value="ECO:0007669"/>
    <property type="project" value="InterPro"/>
</dbReference>
<dbReference type="GO" id="GO:0050660">
    <property type="term" value="F:flavin adenine dinucleotide binding"/>
    <property type="evidence" value="ECO:0007669"/>
    <property type="project" value="InterPro"/>
</dbReference>
<dbReference type="GO" id="GO:0009437">
    <property type="term" value="P:carnitine metabolic process"/>
    <property type="evidence" value="ECO:0007669"/>
    <property type="project" value="UniProtKB-UniRule"/>
</dbReference>
<dbReference type="CDD" id="cd00567">
    <property type="entry name" value="ACAD"/>
    <property type="match status" value="1"/>
</dbReference>
<dbReference type="FunFam" id="1.20.140.10:FF:000001">
    <property type="entry name" value="Acyl-CoA dehydrogenase"/>
    <property type="match status" value="1"/>
</dbReference>
<dbReference type="FunFam" id="2.40.110.10:FF:000002">
    <property type="entry name" value="Acyl-CoA dehydrogenase fadE12"/>
    <property type="match status" value="1"/>
</dbReference>
<dbReference type="FunFam" id="1.10.540.10:FF:000005">
    <property type="entry name" value="Crotonobetainyl-CoA reductase"/>
    <property type="match status" value="1"/>
</dbReference>
<dbReference type="Gene3D" id="1.10.540.10">
    <property type="entry name" value="Acyl-CoA dehydrogenase/oxidase, N-terminal domain"/>
    <property type="match status" value="1"/>
</dbReference>
<dbReference type="Gene3D" id="2.40.110.10">
    <property type="entry name" value="Butyryl-CoA Dehydrogenase, subunit A, domain 2"/>
    <property type="match status" value="1"/>
</dbReference>
<dbReference type="Gene3D" id="1.20.140.10">
    <property type="entry name" value="Butyryl-CoA Dehydrogenase, subunit A, domain 3"/>
    <property type="match status" value="1"/>
</dbReference>
<dbReference type="HAMAP" id="MF_01052">
    <property type="entry name" value="CaiA"/>
    <property type="match status" value="1"/>
</dbReference>
<dbReference type="InterPro" id="IPR006089">
    <property type="entry name" value="Acyl-CoA_DH_CS"/>
</dbReference>
<dbReference type="InterPro" id="IPR006091">
    <property type="entry name" value="Acyl-CoA_Oxase/DH_mid-dom"/>
</dbReference>
<dbReference type="InterPro" id="IPR046373">
    <property type="entry name" value="Acyl-CoA_Oxase/DH_mid-dom_sf"/>
</dbReference>
<dbReference type="InterPro" id="IPR036250">
    <property type="entry name" value="AcylCo_DH-like_C"/>
</dbReference>
<dbReference type="InterPro" id="IPR009075">
    <property type="entry name" value="AcylCo_DH/oxidase_C"/>
</dbReference>
<dbReference type="InterPro" id="IPR013786">
    <property type="entry name" value="AcylCoA_DH/ox_N"/>
</dbReference>
<dbReference type="InterPro" id="IPR037069">
    <property type="entry name" value="AcylCoA_DH/ox_N_sf"/>
</dbReference>
<dbReference type="InterPro" id="IPR009100">
    <property type="entry name" value="AcylCoA_DH/oxidase_NM_dom_sf"/>
</dbReference>
<dbReference type="InterPro" id="IPR023450">
    <property type="entry name" value="CaiA"/>
</dbReference>
<dbReference type="NCBIfam" id="NF002885">
    <property type="entry name" value="PRK03354.1"/>
    <property type="match status" value="1"/>
</dbReference>
<dbReference type="PANTHER" id="PTHR43884">
    <property type="entry name" value="ACYL-COA DEHYDROGENASE"/>
    <property type="match status" value="1"/>
</dbReference>
<dbReference type="PANTHER" id="PTHR43884:SF12">
    <property type="entry name" value="ISOVALERYL-COA DEHYDROGENASE, MITOCHONDRIAL-RELATED"/>
    <property type="match status" value="1"/>
</dbReference>
<dbReference type="Pfam" id="PF00441">
    <property type="entry name" value="Acyl-CoA_dh_1"/>
    <property type="match status" value="1"/>
</dbReference>
<dbReference type="Pfam" id="PF02770">
    <property type="entry name" value="Acyl-CoA_dh_M"/>
    <property type="match status" value="1"/>
</dbReference>
<dbReference type="Pfam" id="PF02771">
    <property type="entry name" value="Acyl-CoA_dh_N"/>
    <property type="match status" value="1"/>
</dbReference>
<dbReference type="PIRSF" id="PIRSF016578">
    <property type="entry name" value="HsaA"/>
    <property type="match status" value="1"/>
</dbReference>
<dbReference type="SUPFAM" id="SSF47203">
    <property type="entry name" value="Acyl-CoA dehydrogenase C-terminal domain-like"/>
    <property type="match status" value="1"/>
</dbReference>
<dbReference type="SUPFAM" id="SSF56645">
    <property type="entry name" value="Acyl-CoA dehydrogenase NM domain-like"/>
    <property type="match status" value="1"/>
</dbReference>
<dbReference type="PROSITE" id="PS00072">
    <property type="entry name" value="ACYL_COA_DH_1"/>
    <property type="match status" value="1"/>
</dbReference>
<dbReference type="PROSITE" id="PS00073">
    <property type="entry name" value="ACYL_COA_DH_2"/>
    <property type="match status" value="1"/>
</dbReference>
<keyword id="KW-0963">Cytoplasm</keyword>
<keyword id="KW-0274">FAD</keyword>
<keyword id="KW-0285">Flavoprotein</keyword>
<keyword id="KW-0560">Oxidoreductase</keyword>
<comment type="function">
    <text evidence="1">Catalyzes the reduction of crotonobetainyl-CoA to gamma-butyrobetainyl-CoA.</text>
</comment>
<comment type="catalytic activity">
    <reaction evidence="1">
        <text>4-(trimethylamino)butanoyl-CoA + oxidized [electron-transfer flavoprotein] + H(+) = crotonobetainyl-CoA + reduced [electron-transfer flavoprotein]</text>
        <dbReference type="Rhea" id="RHEA:51584"/>
        <dbReference type="Rhea" id="RHEA-COMP:10685"/>
        <dbReference type="Rhea" id="RHEA-COMP:10686"/>
        <dbReference type="ChEBI" id="CHEBI:15378"/>
        <dbReference type="ChEBI" id="CHEBI:57692"/>
        <dbReference type="ChEBI" id="CHEBI:58307"/>
        <dbReference type="ChEBI" id="CHEBI:60933"/>
        <dbReference type="ChEBI" id="CHEBI:61513"/>
        <dbReference type="EC" id="1.3.8.13"/>
    </reaction>
</comment>
<comment type="cofactor">
    <cofactor evidence="1">
        <name>FAD</name>
        <dbReference type="ChEBI" id="CHEBI:57692"/>
    </cofactor>
</comment>
<comment type="pathway">
    <text evidence="1">Amine and polyamine metabolism; carnitine metabolism.</text>
</comment>
<comment type="subunit">
    <text evidence="1">Homotetramer.</text>
</comment>
<comment type="subcellular location">
    <subcellularLocation>
        <location evidence="1">Cytoplasm</location>
    </subcellularLocation>
</comment>
<comment type="similarity">
    <text evidence="1">Belongs to the acyl-CoA dehydrogenase family.</text>
</comment>
<feature type="chain" id="PRO_1000149628" description="Crotonobetainyl-CoA reductase">
    <location>
        <begin position="1"/>
        <end position="380"/>
    </location>
</feature>
<protein>
    <recommendedName>
        <fullName evidence="1">Crotonobetainyl-CoA reductase</fullName>
        <ecNumber evidence="1">1.3.8.13</ecNumber>
    </recommendedName>
    <alternativeName>
        <fullName evidence="1">Crotonobetainyl-CoA dehydrogenase</fullName>
    </alternativeName>
</protein>
<name>CAIA_ECO81</name>
<proteinExistence type="inferred from homology"/>
<evidence type="ECO:0000255" key="1">
    <source>
        <dbReference type="HAMAP-Rule" id="MF_01052"/>
    </source>
</evidence>
<accession>B7MNP6</accession>
<reference key="1">
    <citation type="journal article" date="2009" name="PLoS Genet.">
        <title>Organised genome dynamics in the Escherichia coli species results in highly diverse adaptive paths.</title>
        <authorList>
            <person name="Touchon M."/>
            <person name="Hoede C."/>
            <person name="Tenaillon O."/>
            <person name="Barbe V."/>
            <person name="Baeriswyl S."/>
            <person name="Bidet P."/>
            <person name="Bingen E."/>
            <person name="Bonacorsi S."/>
            <person name="Bouchier C."/>
            <person name="Bouvet O."/>
            <person name="Calteau A."/>
            <person name="Chiapello H."/>
            <person name="Clermont O."/>
            <person name="Cruveiller S."/>
            <person name="Danchin A."/>
            <person name="Diard M."/>
            <person name="Dossat C."/>
            <person name="Karoui M.E."/>
            <person name="Frapy E."/>
            <person name="Garry L."/>
            <person name="Ghigo J.M."/>
            <person name="Gilles A.M."/>
            <person name="Johnson J."/>
            <person name="Le Bouguenec C."/>
            <person name="Lescat M."/>
            <person name="Mangenot S."/>
            <person name="Martinez-Jehanne V."/>
            <person name="Matic I."/>
            <person name="Nassif X."/>
            <person name="Oztas S."/>
            <person name="Petit M.A."/>
            <person name="Pichon C."/>
            <person name="Rouy Z."/>
            <person name="Ruf C.S."/>
            <person name="Schneider D."/>
            <person name="Tourret J."/>
            <person name="Vacherie B."/>
            <person name="Vallenet D."/>
            <person name="Medigue C."/>
            <person name="Rocha E.P.C."/>
            <person name="Denamur E."/>
        </authorList>
    </citation>
    <scope>NUCLEOTIDE SEQUENCE [LARGE SCALE GENOMIC DNA]</scope>
    <source>
        <strain>ED1a</strain>
    </source>
</reference>